<organism>
    <name type="scientific">Psychrobacter cryohalolentis (strain ATCC BAA-1226 / DSM 17306 / VKM B-2378 / K5)</name>
    <dbReference type="NCBI Taxonomy" id="335284"/>
    <lineage>
        <taxon>Bacteria</taxon>
        <taxon>Pseudomonadati</taxon>
        <taxon>Pseudomonadota</taxon>
        <taxon>Gammaproteobacteria</taxon>
        <taxon>Moraxellales</taxon>
        <taxon>Moraxellaceae</taxon>
        <taxon>Psychrobacter</taxon>
    </lineage>
</organism>
<dbReference type="EC" id="4.2.3.4" evidence="1"/>
<dbReference type="EMBL" id="CP000323">
    <property type="protein sequence ID" value="ABE75944.1"/>
    <property type="molecule type" value="Genomic_DNA"/>
</dbReference>
<dbReference type="RefSeq" id="WP_011514480.1">
    <property type="nucleotide sequence ID" value="NC_007969.1"/>
</dbReference>
<dbReference type="SMR" id="Q1Q8Q9"/>
<dbReference type="STRING" id="335284.Pcryo_2167"/>
<dbReference type="KEGG" id="pcr:Pcryo_2167"/>
<dbReference type="eggNOG" id="COG0337">
    <property type="taxonomic scope" value="Bacteria"/>
</dbReference>
<dbReference type="HOGENOM" id="CLU_001201_0_2_6"/>
<dbReference type="UniPathway" id="UPA00053">
    <property type="reaction ID" value="UER00085"/>
</dbReference>
<dbReference type="Proteomes" id="UP000002425">
    <property type="component" value="Chromosome"/>
</dbReference>
<dbReference type="GO" id="GO:0005737">
    <property type="term" value="C:cytoplasm"/>
    <property type="evidence" value="ECO:0007669"/>
    <property type="project" value="UniProtKB-SubCell"/>
</dbReference>
<dbReference type="GO" id="GO:0003856">
    <property type="term" value="F:3-dehydroquinate synthase activity"/>
    <property type="evidence" value="ECO:0007669"/>
    <property type="project" value="UniProtKB-UniRule"/>
</dbReference>
<dbReference type="GO" id="GO:0046872">
    <property type="term" value="F:metal ion binding"/>
    <property type="evidence" value="ECO:0007669"/>
    <property type="project" value="UniProtKB-KW"/>
</dbReference>
<dbReference type="GO" id="GO:0000166">
    <property type="term" value="F:nucleotide binding"/>
    <property type="evidence" value="ECO:0007669"/>
    <property type="project" value="UniProtKB-KW"/>
</dbReference>
<dbReference type="GO" id="GO:0008652">
    <property type="term" value="P:amino acid biosynthetic process"/>
    <property type="evidence" value="ECO:0007669"/>
    <property type="project" value="UniProtKB-KW"/>
</dbReference>
<dbReference type="GO" id="GO:0009073">
    <property type="term" value="P:aromatic amino acid family biosynthetic process"/>
    <property type="evidence" value="ECO:0007669"/>
    <property type="project" value="UniProtKB-KW"/>
</dbReference>
<dbReference type="GO" id="GO:0009423">
    <property type="term" value="P:chorismate biosynthetic process"/>
    <property type="evidence" value="ECO:0007669"/>
    <property type="project" value="UniProtKB-UniRule"/>
</dbReference>
<dbReference type="CDD" id="cd08195">
    <property type="entry name" value="DHQS"/>
    <property type="match status" value="1"/>
</dbReference>
<dbReference type="FunFam" id="3.40.50.1970:FF:000001">
    <property type="entry name" value="3-dehydroquinate synthase"/>
    <property type="match status" value="1"/>
</dbReference>
<dbReference type="Gene3D" id="3.40.50.1970">
    <property type="match status" value="1"/>
</dbReference>
<dbReference type="Gene3D" id="1.20.1090.10">
    <property type="entry name" value="Dehydroquinate synthase-like - alpha domain"/>
    <property type="match status" value="1"/>
</dbReference>
<dbReference type="HAMAP" id="MF_00110">
    <property type="entry name" value="DHQ_synthase"/>
    <property type="match status" value="1"/>
</dbReference>
<dbReference type="InterPro" id="IPR050071">
    <property type="entry name" value="Dehydroquinate_synthase"/>
</dbReference>
<dbReference type="InterPro" id="IPR016037">
    <property type="entry name" value="DHQ_synth_AroB"/>
</dbReference>
<dbReference type="InterPro" id="IPR030963">
    <property type="entry name" value="DHQ_synth_fam"/>
</dbReference>
<dbReference type="InterPro" id="IPR030960">
    <property type="entry name" value="DHQS/DOIS_N"/>
</dbReference>
<dbReference type="InterPro" id="IPR056179">
    <property type="entry name" value="DHQS_C"/>
</dbReference>
<dbReference type="NCBIfam" id="TIGR01357">
    <property type="entry name" value="aroB"/>
    <property type="match status" value="1"/>
</dbReference>
<dbReference type="PANTHER" id="PTHR43622">
    <property type="entry name" value="3-DEHYDROQUINATE SYNTHASE"/>
    <property type="match status" value="1"/>
</dbReference>
<dbReference type="PANTHER" id="PTHR43622:SF7">
    <property type="entry name" value="3-DEHYDROQUINATE SYNTHASE, CHLOROPLASTIC"/>
    <property type="match status" value="1"/>
</dbReference>
<dbReference type="Pfam" id="PF01761">
    <property type="entry name" value="DHQ_synthase"/>
    <property type="match status" value="1"/>
</dbReference>
<dbReference type="Pfam" id="PF24621">
    <property type="entry name" value="DHQS_C"/>
    <property type="match status" value="1"/>
</dbReference>
<dbReference type="PIRSF" id="PIRSF001455">
    <property type="entry name" value="DHQ_synth"/>
    <property type="match status" value="1"/>
</dbReference>
<dbReference type="SUPFAM" id="SSF56796">
    <property type="entry name" value="Dehydroquinate synthase-like"/>
    <property type="match status" value="1"/>
</dbReference>
<proteinExistence type="inferred from homology"/>
<name>AROB_PSYCK</name>
<keyword id="KW-0028">Amino-acid biosynthesis</keyword>
<keyword id="KW-0057">Aromatic amino acid biosynthesis</keyword>
<keyword id="KW-0170">Cobalt</keyword>
<keyword id="KW-0963">Cytoplasm</keyword>
<keyword id="KW-0456">Lyase</keyword>
<keyword id="KW-0479">Metal-binding</keyword>
<keyword id="KW-0520">NAD</keyword>
<keyword id="KW-0547">Nucleotide-binding</keyword>
<keyword id="KW-0862">Zinc</keyword>
<sequence>MATPLFHADLTVHTQSHDYPIVITENAIAENSSMASQVAPYITGRQVLIVTNETVAPLYLKALQEELEAQFTVQVCVLPDGEQYKNQSSINQIYDVLMAVHFNRDVTLIALGGGVIGDMTGFAAASFMRGVNFIQIPTTLLSQVDSSVGGKTGINHPQGKNMIGAFWQPQMVLADMSTLKTLPARELSAGLAEVIKYALIMDAEFLTWLEHNLPAMMALDLAVLGEAVKRCCQYKADVVAQDERESGVRALLNFGHTFGHVIETHEGYGSWLHGEAVAAGMVQAAELSQKIGWLTSDEVACVKRILSLANLPITPPPIEVQTALDLMGHDKKVKHGQIRLILLKSLGEAVLTNDFDPHLLTDVLATHAP</sequence>
<gene>
    <name evidence="1" type="primary">aroB</name>
    <name type="ordered locus">Pcryo_2167</name>
</gene>
<protein>
    <recommendedName>
        <fullName evidence="1">3-dehydroquinate synthase</fullName>
        <shortName evidence="1">DHQS</shortName>
        <ecNumber evidence="1">4.2.3.4</ecNumber>
    </recommendedName>
</protein>
<feature type="chain" id="PRO_1000094576" description="3-dehydroquinate synthase">
    <location>
        <begin position="1"/>
        <end position="369"/>
    </location>
</feature>
<feature type="binding site" evidence="1">
    <location>
        <begin position="80"/>
        <end position="85"/>
    </location>
    <ligand>
        <name>NAD(+)</name>
        <dbReference type="ChEBI" id="CHEBI:57540"/>
    </ligand>
</feature>
<feature type="binding site" evidence="1">
    <location>
        <begin position="114"/>
        <end position="118"/>
    </location>
    <ligand>
        <name>NAD(+)</name>
        <dbReference type="ChEBI" id="CHEBI:57540"/>
    </ligand>
</feature>
<feature type="binding site" evidence="1">
    <location>
        <begin position="138"/>
        <end position="139"/>
    </location>
    <ligand>
        <name>NAD(+)</name>
        <dbReference type="ChEBI" id="CHEBI:57540"/>
    </ligand>
</feature>
<feature type="binding site" evidence="1">
    <location>
        <position position="151"/>
    </location>
    <ligand>
        <name>NAD(+)</name>
        <dbReference type="ChEBI" id="CHEBI:57540"/>
    </ligand>
</feature>
<feature type="binding site" evidence="1">
    <location>
        <position position="160"/>
    </location>
    <ligand>
        <name>NAD(+)</name>
        <dbReference type="ChEBI" id="CHEBI:57540"/>
    </ligand>
</feature>
<feature type="binding site" evidence="1">
    <location>
        <begin position="178"/>
        <end position="181"/>
    </location>
    <ligand>
        <name>NAD(+)</name>
        <dbReference type="ChEBI" id="CHEBI:57540"/>
    </ligand>
</feature>
<feature type="binding site" evidence="1">
    <location>
        <position position="193"/>
    </location>
    <ligand>
        <name>Zn(2+)</name>
        <dbReference type="ChEBI" id="CHEBI:29105"/>
    </ligand>
</feature>
<feature type="binding site" evidence="1">
    <location>
        <position position="256"/>
    </location>
    <ligand>
        <name>Zn(2+)</name>
        <dbReference type="ChEBI" id="CHEBI:29105"/>
    </ligand>
</feature>
<feature type="binding site" evidence="1">
    <location>
        <position position="273"/>
    </location>
    <ligand>
        <name>Zn(2+)</name>
        <dbReference type="ChEBI" id="CHEBI:29105"/>
    </ligand>
</feature>
<comment type="function">
    <text evidence="1">Catalyzes the conversion of 3-deoxy-D-arabino-heptulosonate 7-phosphate (DAHP) to dehydroquinate (DHQ).</text>
</comment>
<comment type="catalytic activity">
    <reaction evidence="1">
        <text>7-phospho-2-dehydro-3-deoxy-D-arabino-heptonate = 3-dehydroquinate + phosphate</text>
        <dbReference type="Rhea" id="RHEA:21968"/>
        <dbReference type="ChEBI" id="CHEBI:32364"/>
        <dbReference type="ChEBI" id="CHEBI:43474"/>
        <dbReference type="ChEBI" id="CHEBI:58394"/>
        <dbReference type="EC" id="4.2.3.4"/>
    </reaction>
</comment>
<comment type="cofactor">
    <cofactor evidence="1">
        <name>Co(2+)</name>
        <dbReference type="ChEBI" id="CHEBI:48828"/>
    </cofactor>
    <cofactor evidence="1">
        <name>Zn(2+)</name>
        <dbReference type="ChEBI" id="CHEBI:29105"/>
    </cofactor>
    <text evidence="1">Binds 1 divalent metal cation per subunit. Can use either Co(2+) or Zn(2+).</text>
</comment>
<comment type="cofactor">
    <cofactor evidence="1">
        <name>NAD(+)</name>
        <dbReference type="ChEBI" id="CHEBI:57540"/>
    </cofactor>
</comment>
<comment type="pathway">
    <text evidence="1">Metabolic intermediate biosynthesis; chorismate biosynthesis; chorismate from D-erythrose 4-phosphate and phosphoenolpyruvate: step 2/7.</text>
</comment>
<comment type="subcellular location">
    <subcellularLocation>
        <location evidence="1">Cytoplasm</location>
    </subcellularLocation>
</comment>
<comment type="similarity">
    <text evidence="1">Belongs to the sugar phosphate cyclases superfamily. Dehydroquinate synthase family.</text>
</comment>
<reference key="1">
    <citation type="submission" date="2006-03" db="EMBL/GenBank/DDBJ databases">
        <title>Complete sequence of chromosome of Psychrobacter cryohalolentis K5.</title>
        <authorList>
            <consortium name="US DOE Joint Genome Institute"/>
            <person name="Copeland A."/>
            <person name="Lucas S."/>
            <person name="Lapidus A."/>
            <person name="Barry K."/>
            <person name="Detter J.C."/>
            <person name="Glavina T."/>
            <person name="Hammon N."/>
            <person name="Israni S."/>
            <person name="Dalin E."/>
            <person name="Tice H."/>
            <person name="Pitluck S."/>
            <person name="Brettin T."/>
            <person name="Bruce D."/>
            <person name="Han C."/>
            <person name="Tapia R."/>
            <person name="Sims D.R."/>
            <person name="Gilna P."/>
            <person name="Schmutz J."/>
            <person name="Larimer F."/>
            <person name="Land M."/>
            <person name="Hauser L."/>
            <person name="Kyrpides N."/>
            <person name="Kim E."/>
            <person name="Richardson P."/>
        </authorList>
    </citation>
    <scope>NUCLEOTIDE SEQUENCE [LARGE SCALE GENOMIC DNA]</scope>
    <source>
        <strain>ATCC BAA-1226 / DSM 17306 / VKM B-2378 / K5</strain>
    </source>
</reference>
<accession>Q1Q8Q9</accession>
<evidence type="ECO:0000255" key="1">
    <source>
        <dbReference type="HAMAP-Rule" id="MF_00110"/>
    </source>
</evidence>